<organism>
    <name type="scientific">Histophilus somni (strain 129Pt)</name>
    <name type="common">Haemophilus somnus</name>
    <dbReference type="NCBI Taxonomy" id="205914"/>
    <lineage>
        <taxon>Bacteria</taxon>
        <taxon>Pseudomonadati</taxon>
        <taxon>Pseudomonadota</taxon>
        <taxon>Gammaproteobacteria</taxon>
        <taxon>Pasteurellales</taxon>
        <taxon>Pasteurellaceae</taxon>
        <taxon>Histophilus</taxon>
    </lineage>
</organism>
<proteinExistence type="inferred from homology"/>
<comment type="function">
    <text evidence="1">Catalyzes the reversible conversion of 3-phosphohydroxypyruvate to phosphoserine and of 3-hydroxy-2-oxo-4-phosphonooxybutanoate to phosphohydroxythreonine.</text>
</comment>
<comment type="catalytic activity">
    <reaction evidence="1">
        <text>O-phospho-L-serine + 2-oxoglutarate = 3-phosphooxypyruvate + L-glutamate</text>
        <dbReference type="Rhea" id="RHEA:14329"/>
        <dbReference type="ChEBI" id="CHEBI:16810"/>
        <dbReference type="ChEBI" id="CHEBI:18110"/>
        <dbReference type="ChEBI" id="CHEBI:29985"/>
        <dbReference type="ChEBI" id="CHEBI:57524"/>
        <dbReference type="EC" id="2.6.1.52"/>
    </reaction>
</comment>
<comment type="catalytic activity">
    <reaction evidence="1">
        <text>4-(phosphooxy)-L-threonine + 2-oxoglutarate = (R)-3-hydroxy-2-oxo-4-phosphooxybutanoate + L-glutamate</text>
        <dbReference type="Rhea" id="RHEA:16573"/>
        <dbReference type="ChEBI" id="CHEBI:16810"/>
        <dbReference type="ChEBI" id="CHEBI:29985"/>
        <dbReference type="ChEBI" id="CHEBI:58452"/>
        <dbReference type="ChEBI" id="CHEBI:58538"/>
        <dbReference type="EC" id="2.6.1.52"/>
    </reaction>
</comment>
<comment type="cofactor">
    <cofactor evidence="1">
        <name>pyridoxal 5'-phosphate</name>
        <dbReference type="ChEBI" id="CHEBI:597326"/>
    </cofactor>
    <text evidence="1">Binds 1 pyridoxal phosphate per subunit.</text>
</comment>
<comment type="pathway">
    <text evidence="1">Amino-acid biosynthesis; L-serine biosynthesis; L-serine from 3-phospho-D-glycerate: step 2/3.</text>
</comment>
<comment type="pathway">
    <text evidence="1">Cofactor biosynthesis; pyridoxine 5'-phosphate biosynthesis; pyridoxine 5'-phosphate from D-erythrose 4-phosphate: step 3/5.</text>
</comment>
<comment type="subunit">
    <text evidence="1">Homodimer.</text>
</comment>
<comment type="subcellular location">
    <subcellularLocation>
        <location evidence="1">Cytoplasm</location>
    </subcellularLocation>
</comment>
<comment type="similarity">
    <text evidence="1">Belongs to the class-V pyridoxal-phosphate-dependent aminotransferase family. SerC subfamily.</text>
</comment>
<gene>
    <name evidence="1" type="primary">serC</name>
    <name type="ordered locus">HS_0611</name>
</gene>
<dbReference type="EC" id="2.6.1.52" evidence="1"/>
<dbReference type="EMBL" id="CP000436">
    <property type="protein sequence ID" value="ABI24888.1"/>
    <property type="molecule type" value="Genomic_DNA"/>
</dbReference>
<dbReference type="SMR" id="Q0I322"/>
<dbReference type="KEGG" id="hso:HS_0611"/>
<dbReference type="eggNOG" id="COG1932">
    <property type="taxonomic scope" value="Bacteria"/>
</dbReference>
<dbReference type="HOGENOM" id="CLU_034866_0_2_6"/>
<dbReference type="UniPathway" id="UPA00135">
    <property type="reaction ID" value="UER00197"/>
</dbReference>
<dbReference type="UniPathway" id="UPA00244">
    <property type="reaction ID" value="UER00311"/>
</dbReference>
<dbReference type="GO" id="GO:0005737">
    <property type="term" value="C:cytoplasm"/>
    <property type="evidence" value="ECO:0007669"/>
    <property type="project" value="UniProtKB-SubCell"/>
</dbReference>
<dbReference type="GO" id="GO:0004648">
    <property type="term" value="F:O-phospho-L-serine:2-oxoglutarate aminotransferase activity"/>
    <property type="evidence" value="ECO:0007669"/>
    <property type="project" value="UniProtKB-UniRule"/>
</dbReference>
<dbReference type="GO" id="GO:0030170">
    <property type="term" value="F:pyridoxal phosphate binding"/>
    <property type="evidence" value="ECO:0007669"/>
    <property type="project" value="UniProtKB-UniRule"/>
</dbReference>
<dbReference type="GO" id="GO:0006564">
    <property type="term" value="P:L-serine biosynthetic process"/>
    <property type="evidence" value="ECO:0007669"/>
    <property type="project" value="UniProtKB-UniRule"/>
</dbReference>
<dbReference type="GO" id="GO:0008615">
    <property type="term" value="P:pyridoxine biosynthetic process"/>
    <property type="evidence" value="ECO:0007669"/>
    <property type="project" value="UniProtKB-UniRule"/>
</dbReference>
<dbReference type="CDD" id="cd00611">
    <property type="entry name" value="PSAT_like"/>
    <property type="match status" value="1"/>
</dbReference>
<dbReference type="FunFam" id="3.40.640.10:FF:000010">
    <property type="entry name" value="Phosphoserine aminotransferase"/>
    <property type="match status" value="1"/>
</dbReference>
<dbReference type="FunFam" id="3.90.1150.10:FF:000006">
    <property type="entry name" value="Phosphoserine aminotransferase"/>
    <property type="match status" value="1"/>
</dbReference>
<dbReference type="Gene3D" id="3.90.1150.10">
    <property type="entry name" value="Aspartate Aminotransferase, domain 1"/>
    <property type="match status" value="1"/>
</dbReference>
<dbReference type="Gene3D" id="3.40.640.10">
    <property type="entry name" value="Type I PLP-dependent aspartate aminotransferase-like (Major domain)"/>
    <property type="match status" value="1"/>
</dbReference>
<dbReference type="HAMAP" id="MF_00160">
    <property type="entry name" value="SerC_aminotrans_5"/>
    <property type="match status" value="1"/>
</dbReference>
<dbReference type="InterPro" id="IPR000192">
    <property type="entry name" value="Aminotrans_V_dom"/>
</dbReference>
<dbReference type="InterPro" id="IPR020578">
    <property type="entry name" value="Aminotrans_V_PyrdxlP_BS"/>
</dbReference>
<dbReference type="InterPro" id="IPR022278">
    <property type="entry name" value="Pser_aminoTfrase"/>
</dbReference>
<dbReference type="InterPro" id="IPR015424">
    <property type="entry name" value="PyrdxlP-dep_Trfase"/>
</dbReference>
<dbReference type="InterPro" id="IPR015421">
    <property type="entry name" value="PyrdxlP-dep_Trfase_major"/>
</dbReference>
<dbReference type="InterPro" id="IPR015422">
    <property type="entry name" value="PyrdxlP-dep_Trfase_small"/>
</dbReference>
<dbReference type="NCBIfam" id="NF003764">
    <property type="entry name" value="PRK05355.1"/>
    <property type="match status" value="1"/>
</dbReference>
<dbReference type="NCBIfam" id="TIGR01364">
    <property type="entry name" value="serC_1"/>
    <property type="match status" value="1"/>
</dbReference>
<dbReference type="PANTHER" id="PTHR43247">
    <property type="entry name" value="PHOSPHOSERINE AMINOTRANSFERASE"/>
    <property type="match status" value="1"/>
</dbReference>
<dbReference type="PANTHER" id="PTHR43247:SF1">
    <property type="entry name" value="PHOSPHOSERINE AMINOTRANSFERASE"/>
    <property type="match status" value="1"/>
</dbReference>
<dbReference type="Pfam" id="PF00266">
    <property type="entry name" value="Aminotran_5"/>
    <property type="match status" value="1"/>
</dbReference>
<dbReference type="PIRSF" id="PIRSF000525">
    <property type="entry name" value="SerC"/>
    <property type="match status" value="1"/>
</dbReference>
<dbReference type="SUPFAM" id="SSF53383">
    <property type="entry name" value="PLP-dependent transferases"/>
    <property type="match status" value="1"/>
</dbReference>
<dbReference type="PROSITE" id="PS00595">
    <property type="entry name" value="AA_TRANSFER_CLASS_5"/>
    <property type="match status" value="1"/>
</dbReference>
<accession>Q0I322</accession>
<name>SERC_HISS1</name>
<feature type="chain" id="PRO_1000058212" description="Phosphoserine aminotransferase">
    <location>
        <begin position="1"/>
        <end position="358"/>
    </location>
</feature>
<feature type="binding site" evidence="1">
    <location>
        <position position="41"/>
    </location>
    <ligand>
        <name>L-glutamate</name>
        <dbReference type="ChEBI" id="CHEBI:29985"/>
    </ligand>
</feature>
<feature type="binding site" evidence="1">
    <location>
        <begin position="75"/>
        <end position="76"/>
    </location>
    <ligand>
        <name>pyridoxal 5'-phosphate</name>
        <dbReference type="ChEBI" id="CHEBI:597326"/>
    </ligand>
</feature>
<feature type="binding site" evidence="1">
    <location>
        <position position="101"/>
    </location>
    <ligand>
        <name>pyridoxal 5'-phosphate</name>
        <dbReference type="ChEBI" id="CHEBI:597326"/>
    </ligand>
</feature>
<feature type="binding site" evidence="1">
    <location>
        <position position="150"/>
    </location>
    <ligand>
        <name>pyridoxal 5'-phosphate</name>
        <dbReference type="ChEBI" id="CHEBI:597326"/>
    </ligand>
</feature>
<feature type="binding site" evidence="1">
    <location>
        <position position="170"/>
    </location>
    <ligand>
        <name>pyridoxal 5'-phosphate</name>
        <dbReference type="ChEBI" id="CHEBI:597326"/>
    </ligand>
</feature>
<feature type="binding site" evidence="1">
    <location>
        <position position="193"/>
    </location>
    <ligand>
        <name>pyridoxal 5'-phosphate</name>
        <dbReference type="ChEBI" id="CHEBI:597326"/>
    </ligand>
</feature>
<feature type="binding site" evidence="1">
    <location>
        <begin position="235"/>
        <end position="236"/>
    </location>
    <ligand>
        <name>pyridoxal 5'-phosphate</name>
        <dbReference type="ChEBI" id="CHEBI:597326"/>
    </ligand>
</feature>
<feature type="modified residue" description="N6-(pyridoxal phosphate)lysine" evidence="1">
    <location>
        <position position="194"/>
    </location>
</feature>
<protein>
    <recommendedName>
        <fullName evidence="1">Phosphoserine aminotransferase</fullName>
        <ecNumber evidence="1">2.6.1.52</ecNumber>
    </recommendedName>
    <alternativeName>
        <fullName evidence="1">Phosphohydroxythreonine aminotransferase</fullName>
        <shortName evidence="1">PSAT</shortName>
    </alternativeName>
</protein>
<keyword id="KW-0028">Amino-acid biosynthesis</keyword>
<keyword id="KW-0032">Aminotransferase</keyword>
<keyword id="KW-0963">Cytoplasm</keyword>
<keyword id="KW-0663">Pyridoxal phosphate</keyword>
<keyword id="KW-0664">Pyridoxine biosynthesis</keyword>
<keyword id="KW-0718">Serine biosynthesis</keyword>
<keyword id="KW-0808">Transferase</keyword>
<evidence type="ECO:0000255" key="1">
    <source>
        <dbReference type="HAMAP-Rule" id="MF_00160"/>
    </source>
</evidence>
<sequence length="358" mass="40032">MQVFNFSAGPAMMPKVVLEQAQQELLNWLDQGTSVMEVSHRGKYFMEMITQAEKDFRQLYNIPENYKVLFLQGGARGQFAAIPMNLANKKGKTLYLTSGHWSATAAKEARLFTEVDEINILLDGKLEVGELDFSHIASQYDYVHYCPNETISGVEIVDVPNVGEAVLVADMSSNILSREIDISKFGVIYAGAQKNLGPAGITVVIVREDLIGHARKETPSIWNYEIQSKNSSMINTPPTFAWYLCSLVFKYLLAQGGIKEMAKLNREKAKLLYDFLDQSDFYHNVVAPKNRSLMNVTFTTNNDELNAKFVAEATACGLQALKGHKVLGGMRASIYNAMPIEGIKALIEFMRKFEAENN</sequence>
<reference key="1">
    <citation type="journal article" date="2007" name="J. Bacteriol.">
        <title>Complete genome sequence of Haemophilus somnus (Histophilus somni) strain 129Pt and comparison to Haemophilus ducreyi 35000HP and Haemophilus influenzae Rd.</title>
        <authorList>
            <person name="Challacombe J.F."/>
            <person name="Duncan A.J."/>
            <person name="Brettin T.S."/>
            <person name="Bruce D."/>
            <person name="Chertkov O."/>
            <person name="Detter J.C."/>
            <person name="Han C.S."/>
            <person name="Misra M."/>
            <person name="Richardson P."/>
            <person name="Tapia R."/>
            <person name="Thayer N."/>
            <person name="Xie G."/>
            <person name="Inzana T.J."/>
        </authorList>
    </citation>
    <scope>NUCLEOTIDE SEQUENCE [LARGE SCALE GENOMIC DNA]</scope>
    <source>
        <strain>129Pt</strain>
    </source>
</reference>